<accession>P71534</accession>
<accession>A0QX27</accession>
<accession>I7FLD4</accession>
<keyword id="KW-0002">3D-structure</keyword>
<keyword id="KW-0134">Cell wall</keyword>
<keyword id="KW-0275">Fatty acid biosynthesis</keyword>
<keyword id="KW-0276">Fatty acid metabolism</keyword>
<keyword id="KW-0444">Lipid biosynthesis</keyword>
<keyword id="KW-0443">Lipid metabolism</keyword>
<keyword id="KW-0521">NADP</keyword>
<keyword id="KW-0560">Oxidoreductase</keyword>
<keyword id="KW-1185">Reference proteome</keyword>
<keyword id="KW-0964">Secreted</keyword>
<proteinExistence type="evidence at protein level"/>
<comment type="function">
    <text evidence="1 3">Part of the mycobacterial fatty acid elongation system FAS-II, which is involved in mycolic acid biosynthesis (By similarity). Catalyzes the NADPH-dependent reduction of beta-ketoacyl derivatives, the second step of the FAS-II elongation cycle (By similarity). Has a preference for longer substrates (PubMed:29717709). Can use CoA derivatives as substrates in vitro (PubMed:29717709).</text>
</comment>
<comment type="catalytic activity">
    <reaction evidence="1">
        <text>a (3R)-hydroxyacyl-[ACP] + NADP(+) = a 3-oxoacyl-[ACP] + NADPH + H(+)</text>
        <dbReference type="Rhea" id="RHEA:17397"/>
        <dbReference type="Rhea" id="RHEA-COMP:9916"/>
        <dbReference type="Rhea" id="RHEA-COMP:9945"/>
        <dbReference type="ChEBI" id="CHEBI:15378"/>
        <dbReference type="ChEBI" id="CHEBI:57783"/>
        <dbReference type="ChEBI" id="CHEBI:58349"/>
        <dbReference type="ChEBI" id="CHEBI:78776"/>
        <dbReference type="ChEBI" id="CHEBI:78827"/>
        <dbReference type="EC" id="1.1.1.100"/>
    </reaction>
    <physiologicalReaction direction="right-to-left" evidence="1">
        <dbReference type="Rhea" id="RHEA:17399"/>
    </physiologicalReaction>
</comment>
<comment type="catalytic activity">
    <reaction evidence="3">
        <text>a (3R)-3-hydroxyacyl-CoA + NADP(+) = a 3-oxoacyl-CoA + NADPH + H(+)</text>
        <dbReference type="Rhea" id="RHEA:22256"/>
        <dbReference type="ChEBI" id="CHEBI:15378"/>
        <dbReference type="ChEBI" id="CHEBI:57319"/>
        <dbReference type="ChEBI" id="CHEBI:57783"/>
        <dbReference type="ChEBI" id="CHEBI:58349"/>
        <dbReference type="ChEBI" id="CHEBI:90726"/>
        <dbReference type="EC" id="1.1.1.36"/>
    </reaction>
    <physiologicalReaction direction="right-to-left" evidence="3">
        <dbReference type="Rhea" id="RHEA:22258"/>
    </physiologicalReaction>
</comment>
<comment type="catalytic activity">
    <reaction evidence="3">
        <text>(3R)-3-hydroxybutanoyl-CoA + NADP(+) = acetoacetyl-CoA + NADPH + H(+)</text>
        <dbReference type="Rhea" id="RHEA:45796"/>
        <dbReference type="ChEBI" id="CHEBI:15378"/>
        <dbReference type="ChEBI" id="CHEBI:57286"/>
        <dbReference type="ChEBI" id="CHEBI:57315"/>
        <dbReference type="ChEBI" id="CHEBI:57783"/>
        <dbReference type="ChEBI" id="CHEBI:58349"/>
    </reaction>
    <physiologicalReaction direction="right-to-left" evidence="3">
        <dbReference type="Rhea" id="RHEA:45798"/>
    </physiologicalReaction>
</comment>
<comment type="catalytic activity">
    <reaction evidence="3">
        <text>(3R)-hydroxyoctanoyl-CoA + NADP(+) = 3-oxooctanoyl-CoA + NADPH + H(+)</text>
        <dbReference type="Rhea" id="RHEA:45844"/>
        <dbReference type="ChEBI" id="CHEBI:15378"/>
        <dbReference type="ChEBI" id="CHEBI:57783"/>
        <dbReference type="ChEBI" id="CHEBI:58349"/>
        <dbReference type="ChEBI" id="CHEBI:62619"/>
        <dbReference type="ChEBI" id="CHEBI:74279"/>
    </reaction>
    <physiologicalReaction direction="right-to-left" evidence="3">
        <dbReference type="Rhea" id="RHEA:45846"/>
    </physiologicalReaction>
</comment>
<comment type="biophysicochemical properties">
    <kinetics>
        <KM evidence="3">3.5 mM for acetoacetyl-CoA</KM>
        <KM evidence="3">0.6 mM for beta-keto-octanoyl-CoA</KM>
        <text evidence="3">kcat is 1.14 sec(-1) with acetoacetyl-CoA as substrate. kcat is 5.72 sec(-1) with beta-keto-octanoyl-CoA as substrate.</text>
    </kinetics>
</comment>
<comment type="pathway">
    <text evidence="1">Lipid metabolism; mycolic acid biosynthesis.</text>
</comment>
<comment type="subunit">
    <text evidence="3">Homotetramer.</text>
</comment>
<comment type="subcellular location">
    <subcellularLocation>
        <location evidence="1">Secreted</location>
        <location evidence="1">Cell wall</location>
    </subcellularLocation>
</comment>
<comment type="domain">
    <text evidence="3">Upon NADPH binding, several residues are pushed away from the active site, allowing the enzyme to adopt an open conformation. The transition from an NADPH-bound to an NADP(+)-bound form is likely to facilitate release of the product.</text>
</comment>
<comment type="similarity">
    <text evidence="5">Belongs to the short-chain dehydrogenases/reductases (SDR) family.</text>
</comment>
<comment type="sequence caution" evidence="5">
    <conflict type="erroneous initiation">
        <sequence resource="EMBL-CDS" id="AFP39533"/>
    </conflict>
    <text>Truncated N-terminus.</text>
</comment>
<dbReference type="EC" id="1.1.1.100" evidence="1"/>
<dbReference type="EC" id="1.1.1.36" evidence="3"/>
<dbReference type="EMBL" id="U66800">
    <property type="protein sequence ID" value="AAC69638.1"/>
    <property type="molecule type" value="Genomic_DNA"/>
</dbReference>
<dbReference type="EMBL" id="CP000480">
    <property type="protein sequence ID" value="ABK71816.1"/>
    <property type="molecule type" value="Genomic_DNA"/>
</dbReference>
<dbReference type="EMBL" id="CP001663">
    <property type="protein sequence ID" value="AFP39533.1"/>
    <property type="status" value="ALT_INIT"/>
    <property type="molecule type" value="Genomic_DNA"/>
</dbReference>
<dbReference type="RefSeq" id="YP_887465.1">
    <property type="nucleotide sequence ID" value="NC_008596.1"/>
</dbReference>
<dbReference type="PDB" id="5OVJ">
    <property type="method" value="X-ray"/>
    <property type="resolution" value="1.70 A"/>
    <property type="chains" value="A/B=1-255"/>
</dbReference>
<dbReference type="PDB" id="5OVK">
    <property type="method" value="X-ray"/>
    <property type="resolution" value="1.45 A"/>
    <property type="chains" value="A/B/C/D=1-255"/>
</dbReference>
<dbReference type="PDB" id="5OVL">
    <property type="method" value="X-ray"/>
    <property type="resolution" value="2.40 A"/>
    <property type="chains" value="A/B/C/D=1-255"/>
</dbReference>
<dbReference type="PDBsum" id="5OVJ"/>
<dbReference type="PDBsum" id="5OVK"/>
<dbReference type="PDBsum" id="5OVL"/>
<dbReference type="SMR" id="P71534"/>
<dbReference type="STRING" id="246196.MSMEG_3150"/>
<dbReference type="PaxDb" id="246196-MSMEI_3069"/>
<dbReference type="KEGG" id="msb:LJ00_15665"/>
<dbReference type="KEGG" id="msg:MSMEI_3069"/>
<dbReference type="KEGG" id="msm:MSMEG_3150"/>
<dbReference type="PATRIC" id="fig|246196.19.peg.3111"/>
<dbReference type="eggNOG" id="COG1028">
    <property type="taxonomic scope" value="Bacteria"/>
</dbReference>
<dbReference type="OrthoDB" id="9804774at2"/>
<dbReference type="SABIO-RK" id="P71534"/>
<dbReference type="UniPathway" id="UPA00915"/>
<dbReference type="Proteomes" id="UP000000757">
    <property type="component" value="Chromosome"/>
</dbReference>
<dbReference type="Proteomes" id="UP000006158">
    <property type="component" value="Chromosome"/>
</dbReference>
<dbReference type="GO" id="GO:0005576">
    <property type="term" value="C:extracellular region"/>
    <property type="evidence" value="ECO:0007669"/>
    <property type="project" value="UniProtKB-KW"/>
</dbReference>
<dbReference type="GO" id="GO:0004316">
    <property type="term" value="F:3-oxoacyl-[acyl-carrier-protein] reductase (NADPH) activity"/>
    <property type="evidence" value="ECO:0000250"/>
    <property type="project" value="UniProtKB"/>
</dbReference>
<dbReference type="GO" id="GO:0018454">
    <property type="term" value="F:acetoacetyl-CoA reductase activity"/>
    <property type="evidence" value="ECO:0007669"/>
    <property type="project" value="UniProtKB-EC"/>
</dbReference>
<dbReference type="GO" id="GO:0050661">
    <property type="term" value="F:NADP binding"/>
    <property type="evidence" value="ECO:0000250"/>
    <property type="project" value="UniProtKB"/>
</dbReference>
<dbReference type="GO" id="GO:0030497">
    <property type="term" value="P:fatty acid elongation"/>
    <property type="evidence" value="ECO:0000250"/>
    <property type="project" value="UniProtKB"/>
</dbReference>
<dbReference type="CDD" id="cd05333">
    <property type="entry name" value="BKR_SDR_c"/>
    <property type="match status" value="1"/>
</dbReference>
<dbReference type="FunFam" id="3.40.50.720:FF:000460">
    <property type="entry name" value="3-oxoacyl-[acyl-carrier-protein] reductase FabG1"/>
    <property type="match status" value="1"/>
</dbReference>
<dbReference type="Gene3D" id="3.40.50.720">
    <property type="entry name" value="NAD(P)-binding Rossmann-like Domain"/>
    <property type="match status" value="1"/>
</dbReference>
<dbReference type="InterPro" id="IPR053419">
    <property type="entry name" value="FAS-II_3-oxoacyl-ACP_reductase"/>
</dbReference>
<dbReference type="InterPro" id="IPR036291">
    <property type="entry name" value="NAD(P)-bd_dom_sf"/>
</dbReference>
<dbReference type="InterPro" id="IPR020904">
    <property type="entry name" value="Sc_DH/Rdtase_CS"/>
</dbReference>
<dbReference type="InterPro" id="IPR050259">
    <property type="entry name" value="SDR"/>
</dbReference>
<dbReference type="InterPro" id="IPR002347">
    <property type="entry name" value="SDR_fam"/>
</dbReference>
<dbReference type="NCBIfam" id="NF040605">
    <property type="entry name" value="mycolic_FabG1"/>
    <property type="match status" value="1"/>
</dbReference>
<dbReference type="NCBIfam" id="NF009466">
    <property type="entry name" value="PRK12826.1-2"/>
    <property type="match status" value="1"/>
</dbReference>
<dbReference type="PANTHER" id="PTHR42879">
    <property type="entry name" value="3-OXOACYL-(ACYL-CARRIER-PROTEIN) REDUCTASE"/>
    <property type="match status" value="1"/>
</dbReference>
<dbReference type="PANTHER" id="PTHR42879:SF2">
    <property type="entry name" value="3-OXOACYL-[ACYL-CARRIER-PROTEIN] REDUCTASE FABG"/>
    <property type="match status" value="1"/>
</dbReference>
<dbReference type="Pfam" id="PF13561">
    <property type="entry name" value="adh_short_C2"/>
    <property type="match status" value="1"/>
</dbReference>
<dbReference type="PRINTS" id="PR00081">
    <property type="entry name" value="GDHRDH"/>
</dbReference>
<dbReference type="PRINTS" id="PR00080">
    <property type="entry name" value="SDRFAMILY"/>
</dbReference>
<dbReference type="SMART" id="SM00822">
    <property type="entry name" value="PKS_KR"/>
    <property type="match status" value="1"/>
</dbReference>
<dbReference type="SUPFAM" id="SSF51735">
    <property type="entry name" value="NAD(P)-binding Rossmann-fold domains"/>
    <property type="match status" value="1"/>
</dbReference>
<dbReference type="PROSITE" id="PS00061">
    <property type="entry name" value="ADH_SHORT"/>
    <property type="match status" value="1"/>
</dbReference>
<name>MABA_MYCS2</name>
<sequence>MTVTDNPADTAGEATAGRPAFVSRSVLVTGGNRGIGLAIARRLAADGHKVAVTHRGSGAPDDLFGVQCDVTDSAAVDRAFKEVEEHQGPVEVLVANAGISKDAFLMRMTEERFEEVINTNLTGAFRCAQRASRTMQRKRFGRIIFIGSVSGMWGIGNQANYAAAKAGLIGMARSISRELAKAGVTANVVAPGYIDTEMTRALDERIQAGALDFIPAKRVGTAEEVAGAVSFLASEDASYIAGAVIPVDGGMGMGH</sequence>
<organism>
    <name type="scientific">Mycolicibacterium smegmatis (strain ATCC 700084 / mc(2)155)</name>
    <name type="common">Mycobacterium smegmatis</name>
    <dbReference type="NCBI Taxonomy" id="246196"/>
    <lineage>
        <taxon>Bacteria</taxon>
        <taxon>Bacillati</taxon>
        <taxon>Actinomycetota</taxon>
        <taxon>Actinomycetes</taxon>
        <taxon>Mycobacteriales</taxon>
        <taxon>Mycobacteriaceae</taxon>
        <taxon>Mycolicibacterium</taxon>
    </lineage>
</organism>
<gene>
    <name evidence="4" type="primary">mabA</name>
    <name type="synonym">fabG</name>
    <name type="ordered locus">MSMEG_3150</name>
    <name type="ordered locus">MSMEI_3069</name>
</gene>
<evidence type="ECO:0000250" key="1">
    <source>
        <dbReference type="UniProtKB" id="P9WGT3"/>
    </source>
</evidence>
<evidence type="ECO:0000255" key="2">
    <source>
        <dbReference type="PROSITE-ProRule" id="PRU10001"/>
    </source>
</evidence>
<evidence type="ECO:0000269" key="3">
    <source>
    </source>
</evidence>
<evidence type="ECO:0000303" key="4">
    <source>
    </source>
</evidence>
<evidence type="ECO:0000305" key="5"/>
<evidence type="ECO:0007744" key="6">
    <source>
        <dbReference type="PDB" id="5OVJ"/>
    </source>
</evidence>
<evidence type="ECO:0007744" key="7">
    <source>
        <dbReference type="PDB" id="5OVK"/>
    </source>
</evidence>
<evidence type="ECO:0007744" key="8">
    <source>
        <dbReference type="PDB" id="5OVL"/>
    </source>
</evidence>
<evidence type="ECO:0007829" key="9">
    <source>
        <dbReference type="PDB" id="5OVK"/>
    </source>
</evidence>
<evidence type="ECO:0007829" key="10">
    <source>
        <dbReference type="PDB" id="5OVL"/>
    </source>
</evidence>
<protein>
    <recommendedName>
        <fullName evidence="5">3-oxoacyl-[acyl-carrier-protein] reductase MabA</fullName>
        <ecNumber evidence="1">1.1.1.100</ecNumber>
    </recommendedName>
    <alternativeName>
        <fullName evidence="1">3-ketoacyl-acyl carrier protein reductase</fullName>
    </alternativeName>
    <alternativeName>
        <fullName evidence="5">Acetoacetyl-CoA reductase</fullName>
        <ecNumber evidence="3">1.1.1.36</ecNumber>
    </alternativeName>
    <alternativeName>
        <fullName evidence="1">Beta-ketoacyl-ACP reductase</fullName>
    </alternativeName>
    <alternativeName>
        <fullName evidence="1">Beta-ketoacyl-acyl carrier protein reductase</fullName>
    </alternativeName>
</protein>
<reference key="1">
    <citation type="submission" date="1996-10" db="EMBL/GenBank/DDBJ databases">
        <title>Molecular cloning, expression and characterization of 3-ketoacyl reductase from mycobacteria.</title>
        <authorList>
            <person name="Banerjee A."/>
            <person name="Sugantino M."/>
            <person name="Sacchettini J.C."/>
            <person name="Jacobs W.R. Jr."/>
        </authorList>
    </citation>
    <scope>NUCLEOTIDE SEQUENCE [GENOMIC DNA]</scope>
</reference>
<reference key="2">
    <citation type="submission" date="2006-10" db="EMBL/GenBank/DDBJ databases">
        <authorList>
            <person name="Fleischmann R.D."/>
            <person name="Dodson R.J."/>
            <person name="Haft D.H."/>
            <person name="Merkel J.S."/>
            <person name="Nelson W.C."/>
            <person name="Fraser C.M."/>
        </authorList>
    </citation>
    <scope>NUCLEOTIDE SEQUENCE [LARGE SCALE GENOMIC DNA]</scope>
    <source>
        <strain>ATCC 700084 / mc(2)155</strain>
    </source>
</reference>
<reference key="3">
    <citation type="journal article" date="2007" name="Genome Biol.">
        <title>Interrupted coding sequences in Mycobacterium smegmatis: authentic mutations or sequencing errors?</title>
        <authorList>
            <person name="Deshayes C."/>
            <person name="Perrodou E."/>
            <person name="Gallien S."/>
            <person name="Euphrasie D."/>
            <person name="Schaeffer C."/>
            <person name="Van-Dorsselaer A."/>
            <person name="Poch O."/>
            <person name="Lecompte O."/>
            <person name="Reyrat J.-M."/>
        </authorList>
    </citation>
    <scope>NUCLEOTIDE SEQUENCE [LARGE SCALE GENOMIC DNA]</scope>
    <source>
        <strain>ATCC 700084 / mc(2)155</strain>
    </source>
</reference>
<reference key="4">
    <citation type="journal article" date="2009" name="Genome Res.">
        <title>Ortho-proteogenomics: multiple proteomes investigation through orthology and a new MS-based protocol.</title>
        <authorList>
            <person name="Gallien S."/>
            <person name="Perrodou E."/>
            <person name="Carapito C."/>
            <person name="Deshayes C."/>
            <person name="Reyrat J.-M."/>
            <person name="Van Dorsselaer A."/>
            <person name="Poch O."/>
            <person name="Schaeffer C."/>
            <person name="Lecompte O."/>
        </authorList>
    </citation>
    <scope>NUCLEOTIDE SEQUENCE [LARGE SCALE GENOMIC DNA]</scope>
    <source>
        <strain>ATCC 700084 / mc(2)155</strain>
    </source>
</reference>
<reference evidence="6 7 8" key="5">
    <citation type="journal article" date="2018" name="Acta Crystallogr. D">
        <title>Structural rearrangements occurring upon cofactor binding in the Mycobacterium smegmatis beta-ketoacyl-acyl carrier protein reductase MabA.</title>
        <authorList>
            <person name="Kussau T."/>
            <person name="Flipo M."/>
            <person name="Van Wyk N."/>
            <person name="Viljoen A."/>
            <person name="Olieric V."/>
            <person name="Kremer L."/>
            <person name="Blaise M."/>
        </authorList>
    </citation>
    <scope>X-RAY CRYSTALLOGRAPHY (1.45 ANGSTROMS) OF APOENZYME AND IN COMPLEXES WITH NADP AND NADPH</scope>
    <scope>FUNCTION</scope>
    <scope>CATALYTIC ACTIVITY</scope>
    <scope>BIOPHYSICOCHEMICAL PROPERTIES</scope>
    <scope>SUBUNIT</scope>
    <scope>DOMAIN</scope>
</reference>
<feature type="chain" id="PRO_0000054674" description="3-oxoacyl-[acyl-carrier-protein] reductase MabA">
    <location>
        <begin position="1"/>
        <end position="255"/>
    </location>
</feature>
<feature type="active site" description="Proton acceptor" evidence="2">
    <location>
        <position position="161"/>
    </location>
</feature>
<feature type="binding site" evidence="3">
    <location>
        <begin position="32"/>
        <end position="35"/>
    </location>
    <ligand>
        <name>NADP(+)</name>
        <dbReference type="ChEBI" id="CHEBI:58349"/>
    </ligand>
</feature>
<feature type="binding site" evidence="3">
    <location>
        <position position="55"/>
    </location>
    <ligand>
        <name>NADP(+)</name>
        <dbReference type="ChEBI" id="CHEBI:58349"/>
    </ligand>
</feature>
<feature type="binding site" evidence="3">
    <location>
        <begin position="69"/>
        <end position="70"/>
    </location>
    <ligand>
        <name>NADP(+)</name>
        <dbReference type="ChEBI" id="CHEBI:58349"/>
    </ligand>
</feature>
<feature type="binding site" evidence="1">
    <location>
        <position position="98"/>
    </location>
    <ligand>
        <name>NADP(+)</name>
        <dbReference type="ChEBI" id="CHEBI:58349"/>
    </ligand>
</feature>
<feature type="binding site" evidence="3">
    <location>
        <position position="161"/>
    </location>
    <ligand>
        <name>NADP(+)</name>
        <dbReference type="ChEBI" id="CHEBI:58349"/>
    </ligand>
</feature>
<feature type="binding site" evidence="3">
    <location>
        <position position="165"/>
    </location>
    <ligand>
        <name>NADP(+)</name>
        <dbReference type="ChEBI" id="CHEBI:58349"/>
    </ligand>
</feature>
<feature type="binding site" evidence="3">
    <location>
        <position position="194"/>
    </location>
    <ligand>
        <name>NADP(+)</name>
        <dbReference type="ChEBI" id="CHEBI:58349"/>
    </ligand>
</feature>
<feature type="binding site" evidence="3">
    <location>
        <position position="205"/>
    </location>
    <ligand>
        <name>NADP(+)</name>
        <dbReference type="ChEBI" id="CHEBI:58349"/>
    </ligand>
</feature>
<feature type="site" description="Important for activity" evidence="1">
    <location>
        <position position="148"/>
    </location>
</feature>
<feature type="sequence conflict" description="In Ref. 1; AAC69638." evidence="5" ref="1">
    <original>A</original>
    <variation>G</variation>
    <location>
        <position position="75"/>
    </location>
</feature>
<feature type="sequence conflict" description="In Ref. 1; AAC69638." evidence="5" ref="1">
    <original>A</original>
    <variation>D</variation>
    <location>
        <position position="180"/>
    </location>
</feature>
<feature type="sequence conflict" description="In Ref. 1; AAC69638." evidence="5" ref="1">
    <original>VA</original>
    <variation>LP</variation>
    <location>
        <begin position="189"/>
        <end position="190"/>
    </location>
</feature>
<feature type="sequence conflict" description="In Ref. 1; AAC69638." evidence="5" ref="1">
    <original>A</original>
    <variation>G</variation>
    <location>
        <position position="208"/>
    </location>
</feature>
<feature type="sequence conflict" description="In Ref. 1; AAC69638." evidence="5" ref="1">
    <original>L</original>
    <variation>I</variation>
    <location>
        <position position="211"/>
    </location>
</feature>
<feature type="sequence conflict" description="In Ref. 1; AAC69638." evidence="5" ref="1">
    <original>A</original>
    <variation>D</variation>
    <location>
        <position position="216"/>
    </location>
</feature>
<feature type="sequence conflict" description="In Ref. 1; AAC69638." evidence="5" ref="1">
    <original>A</original>
    <variation>V</variation>
    <location>
        <position position="222"/>
    </location>
</feature>
<feature type="strand" evidence="9">
    <location>
        <begin position="25"/>
        <end position="29"/>
    </location>
</feature>
<feature type="helix" evidence="9">
    <location>
        <begin position="34"/>
        <end position="46"/>
    </location>
</feature>
<feature type="strand" evidence="9">
    <location>
        <begin position="49"/>
        <end position="57"/>
    </location>
</feature>
<feature type="strand" evidence="9">
    <location>
        <begin position="63"/>
        <end position="67"/>
    </location>
</feature>
<feature type="helix" evidence="9">
    <location>
        <begin position="73"/>
        <end position="87"/>
    </location>
</feature>
<feature type="strand" evidence="9">
    <location>
        <begin position="91"/>
        <end position="95"/>
    </location>
</feature>
<feature type="helix" evidence="9">
    <location>
        <begin position="105"/>
        <end position="107"/>
    </location>
</feature>
<feature type="helix" evidence="9">
    <location>
        <begin position="110"/>
        <end position="120"/>
    </location>
</feature>
<feature type="helix" evidence="9">
    <location>
        <begin position="122"/>
        <end position="138"/>
    </location>
</feature>
<feature type="strand" evidence="9">
    <location>
        <begin position="141"/>
        <end position="146"/>
    </location>
</feature>
<feature type="helix" evidence="9">
    <location>
        <begin position="150"/>
        <end position="153"/>
    </location>
</feature>
<feature type="helix" evidence="9">
    <location>
        <begin position="159"/>
        <end position="179"/>
    </location>
</feature>
<feature type="helix" evidence="9">
    <location>
        <begin position="180"/>
        <end position="182"/>
    </location>
</feature>
<feature type="strand" evidence="9">
    <location>
        <begin position="184"/>
        <end position="191"/>
    </location>
</feature>
<feature type="strand" evidence="10">
    <location>
        <begin position="193"/>
        <end position="195"/>
    </location>
</feature>
<feature type="helix" evidence="9">
    <location>
        <begin position="197"/>
        <end position="201"/>
    </location>
</feature>
<feature type="helix" evidence="9">
    <location>
        <begin position="204"/>
        <end position="211"/>
    </location>
</feature>
<feature type="helix" evidence="9">
    <location>
        <begin position="222"/>
        <end position="233"/>
    </location>
</feature>
<feature type="helix" evidence="10">
    <location>
        <begin position="235"/>
        <end position="237"/>
    </location>
</feature>
<feature type="strand" evidence="9">
    <location>
        <begin position="244"/>
        <end position="248"/>
    </location>
</feature>
<feature type="turn" evidence="9">
    <location>
        <begin position="249"/>
        <end position="252"/>
    </location>
</feature>